<dbReference type="EC" id="3.4.25.1" evidence="1"/>
<dbReference type="EMBL" id="CP001401">
    <property type="protein sequence ID" value="ACP55309.1"/>
    <property type="molecule type" value="Genomic_DNA"/>
</dbReference>
<dbReference type="SMR" id="C3N5N4"/>
<dbReference type="MEROPS" id="T01.002"/>
<dbReference type="KEGG" id="sim:M1627_1426"/>
<dbReference type="HOGENOM" id="CLU_035750_7_2_2"/>
<dbReference type="Proteomes" id="UP000002307">
    <property type="component" value="Chromosome"/>
</dbReference>
<dbReference type="GO" id="GO:0005737">
    <property type="term" value="C:cytoplasm"/>
    <property type="evidence" value="ECO:0007669"/>
    <property type="project" value="UniProtKB-SubCell"/>
</dbReference>
<dbReference type="GO" id="GO:0019774">
    <property type="term" value="C:proteasome core complex, beta-subunit complex"/>
    <property type="evidence" value="ECO:0007669"/>
    <property type="project" value="UniProtKB-UniRule"/>
</dbReference>
<dbReference type="GO" id="GO:0004298">
    <property type="term" value="F:threonine-type endopeptidase activity"/>
    <property type="evidence" value="ECO:0007669"/>
    <property type="project" value="UniProtKB-UniRule"/>
</dbReference>
<dbReference type="GO" id="GO:0010498">
    <property type="term" value="P:proteasomal protein catabolic process"/>
    <property type="evidence" value="ECO:0007669"/>
    <property type="project" value="UniProtKB-UniRule"/>
</dbReference>
<dbReference type="CDD" id="cd03764">
    <property type="entry name" value="proteasome_beta_archeal"/>
    <property type="match status" value="1"/>
</dbReference>
<dbReference type="FunFam" id="3.60.20.10:FF:000049">
    <property type="entry name" value="Proteasome subunit beta"/>
    <property type="match status" value="1"/>
</dbReference>
<dbReference type="Gene3D" id="3.60.20.10">
    <property type="entry name" value="Glutamine Phosphoribosylpyrophosphate, subunit 1, domain 1"/>
    <property type="match status" value="1"/>
</dbReference>
<dbReference type="HAMAP" id="MF_02113_A">
    <property type="entry name" value="Proteasome_B_A"/>
    <property type="match status" value="1"/>
</dbReference>
<dbReference type="InterPro" id="IPR029055">
    <property type="entry name" value="Ntn_hydrolases_N"/>
</dbReference>
<dbReference type="InterPro" id="IPR019983">
    <property type="entry name" value="Pept_T1A_Psome_bsu_arc"/>
</dbReference>
<dbReference type="InterPro" id="IPR000243">
    <property type="entry name" value="Pept_T1A_subB"/>
</dbReference>
<dbReference type="InterPro" id="IPR016050">
    <property type="entry name" value="Proteasome_bsu_CS"/>
</dbReference>
<dbReference type="InterPro" id="IPR001353">
    <property type="entry name" value="Proteasome_sua/b"/>
</dbReference>
<dbReference type="InterPro" id="IPR023333">
    <property type="entry name" value="Proteasome_suB-type"/>
</dbReference>
<dbReference type="NCBIfam" id="TIGR03634">
    <property type="entry name" value="arc_protsome_B"/>
    <property type="match status" value="1"/>
</dbReference>
<dbReference type="PANTHER" id="PTHR32194:SF0">
    <property type="entry name" value="ATP-DEPENDENT PROTEASE SUBUNIT HSLV"/>
    <property type="match status" value="1"/>
</dbReference>
<dbReference type="PANTHER" id="PTHR32194">
    <property type="entry name" value="METALLOPROTEASE TLDD"/>
    <property type="match status" value="1"/>
</dbReference>
<dbReference type="Pfam" id="PF00227">
    <property type="entry name" value="Proteasome"/>
    <property type="match status" value="1"/>
</dbReference>
<dbReference type="PRINTS" id="PR00141">
    <property type="entry name" value="PROTEASOME"/>
</dbReference>
<dbReference type="SUPFAM" id="SSF56235">
    <property type="entry name" value="N-terminal nucleophile aminohydrolases (Ntn hydrolases)"/>
    <property type="match status" value="1"/>
</dbReference>
<dbReference type="PROSITE" id="PS00854">
    <property type="entry name" value="PROTEASOME_BETA_1"/>
    <property type="match status" value="1"/>
</dbReference>
<dbReference type="PROSITE" id="PS51476">
    <property type="entry name" value="PROTEASOME_BETA_2"/>
    <property type="match status" value="1"/>
</dbReference>
<reference key="1">
    <citation type="journal article" date="2009" name="Proc. Natl. Acad. Sci. U.S.A.">
        <title>Biogeography of the Sulfolobus islandicus pan-genome.</title>
        <authorList>
            <person name="Reno M.L."/>
            <person name="Held N.L."/>
            <person name="Fields C.J."/>
            <person name="Burke P.V."/>
            <person name="Whitaker R.J."/>
        </authorList>
    </citation>
    <scope>NUCLEOTIDE SEQUENCE [LARGE SCALE GENOMIC DNA]</scope>
    <source>
        <strain>M.16.27</strain>
    </source>
</reference>
<sequence length="211" mass="23197">MVIMGNELQLENKILKGTTTVGIKVNDGVVLAADRRASAGFFVANKMVRKVLYITDKIGITTAGSVADLQFIYDVLKNIYHYNSITKYGPISIKGIATRLANVLSATKYFPYIVQILIGGYDDQPRLFNLDYLGDITEENYVATGSGSPVAMGVLEDEYNPKMTLDEAADLAKRAVFSAIKRDSFTGTGVIVAKIHSKGHEELEFYLNKKV</sequence>
<gene>
    <name evidence="1" type="primary">psmB1</name>
    <name type="ordered locus">M1627_1426</name>
</gene>
<accession>C3N5N4</accession>
<name>PSB1_SACI3</name>
<keyword id="KW-0068">Autocatalytic cleavage</keyword>
<keyword id="KW-0963">Cytoplasm</keyword>
<keyword id="KW-0378">Hydrolase</keyword>
<keyword id="KW-0645">Protease</keyword>
<keyword id="KW-0647">Proteasome</keyword>
<keyword id="KW-0888">Threonine protease</keyword>
<keyword id="KW-0865">Zymogen</keyword>
<proteinExistence type="inferred from homology"/>
<comment type="function">
    <text evidence="1">Component of the proteasome core, a large protease complex with broad specificity involved in protein degradation.</text>
</comment>
<comment type="catalytic activity">
    <reaction evidence="1">
        <text>Cleavage of peptide bonds with very broad specificity.</text>
        <dbReference type="EC" id="3.4.25.1"/>
    </reaction>
</comment>
<comment type="activity regulation">
    <text evidence="1">The formation of the proteasomal ATPase PAN-20S proteasome complex, via the docking of the C-termini of PAN into the intersubunit pockets in the alpha-rings, triggers opening of the gate for substrate entry. Interconversion between the open-gate and close-gate conformations leads to a dynamic regulation of the 20S proteasome proteolysis activity.</text>
</comment>
<comment type="subunit">
    <text evidence="1">The 20S proteasome core is composed of 14 alpha and 14 beta subunits that assemble into four stacked heptameric rings, resulting in a barrel-shaped structure. The two inner rings, each composed of seven catalytic beta subunits, are sandwiched by two outer rings, each composed of seven alpha subunits. The catalytic chamber with the active sites is on the inside of the barrel. Has a gated structure, the ends of the cylinder being occluded by the N-termini of the alpha-subunits. Is capped at one or both ends by the proteasome regulatory ATPase, PAN.</text>
</comment>
<comment type="subcellular location">
    <subcellularLocation>
        <location evidence="1">Cytoplasm</location>
    </subcellularLocation>
</comment>
<comment type="similarity">
    <text evidence="1">Belongs to the peptidase T1B family.</text>
</comment>
<feature type="propeptide" id="PRO_0000397440" description="Removed in mature form; by autocatalysis" evidence="1">
    <location>
        <begin position="1"/>
        <end position="17"/>
    </location>
</feature>
<feature type="chain" id="PRO_0000397441" description="Proteasome subunit beta 1">
    <location>
        <begin position="18"/>
        <end position="211"/>
    </location>
</feature>
<feature type="active site" description="Nucleophile" evidence="1">
    <location>
        <position position="18"/>
    </location>
</feature>
<protein>
    <recommendedName>
        <fullName evidence="1">Proteasome subunit beta 1</fullName>
        <ecNumber evidence="1">3.4.25.1</ecNumber>
    </recommendedName>
    <alternativeName>
        <fullName evidence="1">20S proteasome beta subunit 1</fullName>
    </alternativeName>
    <alternativeName>
        <fullName evidence="1">Proteasome core protein PsmB 1</fullName>
    </alternativeName>
</protein>
<organism>
    <name type="scientific">Saccharolobus islandicus (strain M.16.27)</name>
    <name type="common">Sulfolobus islandicus</name>
    <dbReference type="NCBI Taxonomy" id="427318"/>
    <lineage>
        <taxon>Archaea</taxon>
        <taxon>Thermoproteota</taxon>
        <taxon>Thermoprotei</taxon>
        <taxon>Sulfolobales</taxon>
        <taxon>Sulfolobaceae</taxon>
        <taxon>Saccharolobus</taxon>
    </lineage>
</organism>
<evidence type="ECO:0000255" key="1">
    <source>
        <dbReference type="HAMAP-Rule" id="MF_02113"/>
    </source>
</evidence>